<feature type="chain" id="PRO_0000158518" description="Ribose-5-phosphate isomerase A">
    <location>
        <begin position="1"/>
        <end position="229"/>
    </location>
</feature>
<feature type="active site" description="Proton acceptor" evidence="1">
    <location>
        <position position="107"/>
    </location>
</feature>
<feature type="binding site" evidence="1">
    <location>
        <begin position="28"/>
        <end position="31"/>
    </location>
    <ligand>
        <name>substrate</name>
    </ligand>
</feature>
<feature type="binding site" evidence="1">
    <location>
        <begin position="85"/>
        <end position="88"/>
    </location>
    <ligand>
        <name>substrate</name>
    </ligand>
</feature>
<feature type="binding site" evidence="1">
    <location>
        <begin position="98"/>
        <end position="101"/>
    </location>
    <ligand>
        <name>substrate</name>
    </ligand>
</feature>
<feature type="binding site" evidence="1">
    <location>
        <position position="125"/>
    </location>
    <ligand>
        <name>substrate</name>
    </ligand>
</feature>
<dbReference type="EC" id="5.3.1.6" evidence="1"/>
<dbReference type="EMBL" id="AP006878">
    <property type="protein sequence ID" value="BAD85615.1"/>
    <property type="molecule type" value="Genomic_DNA"/>
</dbReference>
<dbReference type="RefSeq" id="WP_011250377.1">
    <property type="nucleotide sequence ID" value="NC_006624.1"/>
</dbReference>
<dbReference type="SMR" id="Q5JH26"/>
<dbReference type="FunCoup" id="Q5JH26">
    <property type="interactions" value="220"/>
</dbReference>
<dbReference type="IntAct" id="Q5JH26">
    <property type="interactions" value="1"/>
</dbReference>
<dbReference type="MINT" id="Q5JH26"/>
<dbReference type="STRING" id="69014.TK1426"/>
<dbReference type="EnsemblBacteria" id="BAD85615">
    <property type="protein sequence ID" value="BAD85615"/>
    <property type="gene ID" value="TK1426"/>
</dbReference>
<dbReference type="GeneID" id="78447950"/>
<dbReference type="KEGG" id="tko:TK1426"/>
<dbReference type="PATRIC" id="fig|69014.16.peg.1387"/>
<dbReference type="eggNOG" id="arCOG01122">
    <property type="taxonomic scope" value="Archaea"/>
</dbReference>
<dbReference type="HOGENOM" id="CLU_056590_1_1_2"/>
<dbReference type="InParanoid" id="Q5JH26"/>
<dbReference type="OrthoDB" id="19013at2157"/>
<dbReference type="PhylomeDB" id="Q5JH26"/>
<dbReference type="UniPathway" id="UPA00115">
    <property type="reaction ID" value="UER00412"/>
</dbReference>
<dbReference type="Proteomes" id="UP000000536">
    <property type="component" value="Chromosome"/>
</dbReference>
<dbReference type="GO" id="GO:0005829">
    <property type="term" value="C:cytosol"/>
    <property type="evidence" value="ECO:0000318"/>
    <property type="project" value="GO_Central"/>
</dbReference>
<dbReference type="GO" id="GO:0004751">
    <property type="term" value="F:ribose-5-phosphate isomerase activity"/>
    <property type="evidence" value="ECO:0000318"/>
    <property type="project" value="GO_Central"/>
</dbReference>
<dbReference type="GO" id="GO:0006014">
    <property type="term" value="P:D-ribose metabolic process"/>
    <property type="evidence" value="ECO:0000318"/>
    <property type="project" value="GO_Central"/>
</dbReference>
<dbReference type="GO" id="GO:0009052">
    <property type="term" value="P:pentose-phosphate shunt, non-oxidative branch"/>
    <property type="evidence" value="ECO:0000318"/>
    <property type="project" value="GO_Central"/>
</dbReference>
<dbReference type="CDD" id="cd01398">
    <property type="entry name" value="RPI_A"/>
    <property type="match status" value="1"/>
</dbReference>
<dbReference type="FunFam" id="3.30.70.260:FF:000018">
    <property type="entry name" value="Ribose-5-phosphate isomerase A"/>
    <property type="match status" value="1"/>
</dbReference>
<dbReference type="FunFam" id="3.40.50.1360:FF:000001">
    <property type="entry name" value="Ribose-5-phosphate isomerase A"/>
    <property type="match status" value="1"/>
</dbReference>
<dbReference type="Gene3D" id="3.30.70.260">
    <property type="match status" value="1"/>
</dbReference>
<dbReference type="Gene3D" id="3.40.50.1360">
    <property type="match status" value="1"/>
</dbReference>
<dbReference type="HAMAP" id="MF_00170">
    <property type="entry name" value="Rib_5P_isom_A"/>
    <property type="match status" value="1"/>
</dbReference>
<dbReference type="InterPro" id="IPR037171">
    <property type="entry name" value="NagB/RpiA_transferase-like"/>
</dbReference>
<dbReference type="InterPro" id="IPR020672">
    <property type="entry name" value="Ribose5P_isomerase_typA_subgr"/>
</dbReference>
<dbReference type="InterPro" id="IPR004788">
    <property type="entry name" value="Ribose5P_isomerase_type_A"/>
</dbReference>
<dbReference type="NCBIfam" id="NF001924">
    <property type="entry name" value="PRK00702.1"/>
    <property type="match status" value="1"/>
</dbReference>
<dbReference type="NCBIfam" id="TIGR00021">
    <property type="entry name" value="rpiA"/>
    <property type="match status" value="1"/>
</dbReference>
<dbReference type="PANTHER" id="PTHR11934">
    <property type="entry name" value="RIBOSE-5-PHOSPHATE ISOMERASE"/>
    <property type="match status" value="1"/>
</dbReference>
<dbReference type="PANTHER" id="PTHR11934:SF0">
    <property type="entry name" value="RIBOSE-5-PHOSPHATE ISOMERASE"/>
    <property type="match status" value="1"/>
</dbReference>
<dbReference type="Pfam" id="PF06026">
    <property type="entry name" value="Rib_5-P_isom_A"/>
    <property type="match status" value="1"/>
</dbReference>
<dbReference type="SUPFAM" id="SSF75445">
    <property type="entry name" value="D-ribose-5-phosphate isomerase (RpiA), lid domain"/>
    <property type="match status" value="1"/>
</dbReference>
<dbReference type="SUPFAM" id="SSF100950">
    <property type="entry name" value="NagB/RpiA/CoA transferase-like"/>
    <property type="match status" value="1"/>
</dbReference>
<proteinExistence type="inferred from homology"/>
<evidence type="ECO:0000255" key="1">
    <source>
        <dbReference type="HAMAP-Rule" id="MF_00170"/>
    </source>
</evidence>
<name>RPIA_THEKO</name>
<reference key="1">
    <citation type="journal article" date="2005" name="Genome Res.">
        <title>Complete genome sequence of the hyperthermophilic archaeon Thermococcus kodakaraensis KOD1 and comparison with Pyrococcus genomes.</title>
        <authorList>
            <person name="Fukui T."/>
            <person name="Atomi H."/>
            <person name="Kanai T."/>
            <person name="Matsumi R."/>
            <person name="Fujiwara S."/>
            <person name="Imanaka T."/>
        </authorList>
    </citation>
    <scope>NUCLEOTIDE SEQUENCE [LARGE SCALE GENOMIC DNA]</scope>
    <source>
        <strain>ATCC BAA-918 / JCM 12380 / KOD1</strain>
    </source>
</reference>
<organism>
    <name type="scientific">Thermococcus kodakarensis (strain ATCC BAA-918 / JCM 12380 / KOD1)</name>
    <name type="common">Pyrococcus kodakaraensis (strain KOD1)</name>
    <dbReference type="NCBI Taxonomy" id="69014"/>
    <lineage>
        <taxon>Archaea</taxon>
        <taxon>Methanobacteriati</taxon>
        <taxon>Methanobacteriota</taxon>
        <taxon>Thermococci</taxon>
        <taxon>Thermococcales</taxon>
        <taxon>Thermococcaceae</taxon>
        <taxon>Thermococcus</taxon>
    </lineage>
</organism>
<comment type="function">
    <text evidence="1">Catalyzes the reversible conversion of ribose-5-phosphate to ribulose 5-phosphate.</text>
</comment>
<comment type="catalytic activity">
    <reaction evidence="1">
        <text>aldehydo-D-ribose 5-phosphate = D-ribulose 5-phosphate</text>
        <dbReference type="Rhea" id="RHEA:14657"/>
        <dbReference type="ChEBI" id="CHEBI:58121"/>
        <dbReference type="ChEBI" id="CHEBI:58273"/>
        <dbReference type="EC" id="5.3.1.6"/>
    </reaction>
</comment>
<comment type="pathway">
    <text evidence="1">Carbohydrate degradation; pentose phosphate pathway; D-ribose 5-phosphate from D-ribulose 5-phosphate (non-oxidative stage): step 1/1.</text>
</comment>
<comment type="subunit">
    <text evidence="1">Homodimer.</text>
</comment>
<comment type="similarity">
    <text evidence="1">Belongs to the ribose 5-phosphate isomerase family.</text>
</comment>
<gene>
    <name evidence="1" type="primary">rpiA</name>
    <name type="ordered locus">TK1426</name>
</gene>
<protein>
    <recommendedName>
        <fullName evidence="1">Ribose-5-phosphate isomerase A</fullName>
        <ecNumber evidence="1">5.3.1.6</ecNumber>
    </recommendedName>
    <alternativeName>
        <fullName evidence="1">Phosphoriboisomerase A</fullName>
        <shortName evidence="1">PRI</shortName>
    </alternativeName>
</protein>
<accession>Q5JH26</accession>
<sequence length="229" mass="25014">MNVEEMKKAVAKEALKFIEDEMVVGLGTGSTTAYFINYLGKLLMEGELEDVYGVPTSHQARLLALEAGIPVVSLDEVDAIDIAVDGADEVDPHMNLIKGRGAALTMEKIIEYRAGMFIVLVDESKLVEYLGQKMPVPIEVIPAAWRAIAEELEVFNATAELRMAVKKDGPVVTDNGNFILDAKFARIEDPLDLEIELNTIPGVVENGIFADIADIILVGTPEGVKRMER</sequence>
<keyword id="KW-0413">Isomerase</keyword>
<keyword id="KW-1185">Reference proteome</keyword>